<comment type="function">
    <text>Binds preferentially to single-stranded DNA and therefore, destabilizes double-stranded DNA. It is involved in DNA replication, repair and recombination. Binds ss-DNA as the replication fork advances and stimulates the replisome processivity and accuracy.</text>
</comment>
<comment type="subunit">
    <text evidence="1">Homodimer in the absence of DNA, monomer when binding DNA.</text>
</comment>
<comment type="miscellaneous">
    <text evidence="1">Interacts with the polymerase and the uvsX and uvsY proteins.</text>
</comment>
<feature type="chain" id="PRO_0000165058" description="Single-stranded DNA-binding protein">
    <location>
        <begin position="1"/>
        <end position="50" status="greater than"/>
    </location>
</feature>
<feature type="non-terminal residue">
    <location>
        <position position="50"/>
    </location>
</feature>
<proteinExistence type="inferred from homology"/>
<organismHost>
    <name type="scientific">Escherichia coli</name>
    <dbReference type="NCBI Taxonomy" id="562"/>
</organismHost>
<accession>O21955</accession>
<organism>
    <name type="scientific">Enterobacteria phage RB15</name>
    <name type="common">Bacteriophage RB15</name>
    <dbReference type="NCBI Taxonomy" id="36340"/>
    <lineage>
        <taxon>Viruses</taxon>
        <taxon>Duplodnaviria</taxon>
        <taxon>Heunggongvirae</taxon>
        <taxon>Uroviricota</taxon>
        <taxon>Caudoviricetes</taxon>
        <taxon>Straboviridae</taxon>
        <taxon>Tevenvirinae</taxon>
        <taxon>Tequatrovirus</taxon>
    </lineage>
</organism>
<sequence>MFKRKSTAELAAQMAKLAGNKGGFSSEDKGEWKLKLDNAGNGQAVIRFLP</sequence>
<protein>
    <recommendedName>
        <fullName>Single-stranded DNA-binding protein</fullName>
    </recommendedName>
    <alternativeName>
        <fullName>Gp32</fullName>
    </alternativeName>
    <alternativeName>
        <fullName>Helix-destabilizing protein</fullName>
    </alternativeName>
</protein>
<evidence type="ECO:0000250" key="1"/>
<reference key="1">
    <citation type="submission" date="1997-11" db="EMBL/GenBank/DDBJ databases">
        <authorList>
            <person name="Theimer C.A."/>
            <person name="Krisch H.M."/>
            <person name="Giedroc D.P."/>
        </authorList>
    </citation>
    <scope>NUCLEOTIDE SEQUENCE [GENOMIC DNA]</scope>
</reference>
<gene>
    <name type="primary">32</name>
    <name type="synonym">ssb</name>
</gene>
<name>VHED_BPR15</name>
<keyword id="KW-0227">DNA damage</keyword>
<keyword id="KW-0233">DNA recombination</keyword>
<keyword id="KW-0234">DNA repair</keyword>
<keyword id="KW-0235">DNA replication</keyword>
<keyword id="KW-0238">DNA-binding</keyword>
<keyword id="KW-0479">Metal-binding</keyword>
<keyword id="KW-0862">Zinc</keyword>
<keyword id="KW-0863">Zinc-finger</keyword>
<dbReference type="EMBL" id="AF033328">
    <property type="protein sequence ID" value="AAB87493.1"/>
    <property type="molecule type" value="Genomic_DNA"/>
</dbReference>
<dbReference type="SMR" id="O21955"/>
<dbReference type="GO" id="GO:0003677">
    <property type="term" value="F:DNA binding"/>
    <property type="evidence" value="ECO:0007669"/>
    <property type="project" value="UniProtKB-KW"/>
</dbReference>
<dbReference type="GO" id="GO:0008270">
    <property type="term" value="F:zinc ion binding"/>
    <property type="evidence" value="ECO:0007669"/>
    <property type="project" value="UniProtKB-KW"/>
</dbReference>
<dbReference type="GO" id="GO:0006310">
    <property type="term" value="P:DNA recombination"/>
    <property type="evidence" value="ECO:0007669"/>
    <property type="project" value="UniProtKB-KW"/>
</dbReference>
<dbReference type="GO" id="GO:0006281">
    <property type="term" value="P:DNA repair"/>
    <property type="evidence" value="ECO:0007669"/>
    <property type="project" value="UniProtKB-KW"/>
</dbReference>
<dbReference type="GO" id="GO:0006260">
    <property type="term" value="P:DNA replication"/>
    <property type="evidence" value="ECO:0007669"/>
    <property type="project" value="UniProtKB-KW"/>
</dbReference>
<dbReference type="Gene3D" id="3.90.198.10">
    <property type="entry name" value="Replication Fork Single-Stranded Dna Binding Protein"/>
    <property type="match status" value="1"/>
</dbReference>
<dbReference type="InterPro" id="IPR012340">
    <property type="entry name" value="NA-bd_OB-fold"/>
</dbReference>
<dbReference type="InterPro" id="IPR044947">
    <property type="entry name" value="Phage_T4_Gp32_ssDNA-bd_sf"/>
</dbReference>
<dbReference type="SUPFAM" id="SSF50249">
    <property type="entry name" value="Nucleic acid-binding proteins"/>
    <property type="match status" value="1"/>
</dbReference>